<protein>
    <recommendedName>
        <fullName evidence="1">Aliphatic amidase</fullName>
        <ecNumber evidence="1">3.5.1.4</ecNumber>
    </recommendedName>
    <alternativeName>
        <fullName evidence="1">Acylamide amidohydrolase</fullName>
    </alternativeName>
</protein>
<evidence type="ECO:0000255" key="1">
    <source>
        <dbReference type="HAMAP-Rule" id="MF_01242"/>
    </source>
</evidence>
<evidence type="ECO:0000255" key="2">
    <source>
        <dbReference type="PROSITE-ProRule" id="PRU00054"/>
    </source>
</evidence>
<comment type="function">
    <text evidence="1">Catalyzes the hydrolysis of short-chain aliphatic amides to their corresponding organic acids with release of ammonia.</text>
</comment>
<comment type="function">
    <text evidence="1">Also exhibits in vitro acyl transferase activity, transferring the acyl moiety of short-chain amides to hydroxylamine to form hydroxamates.</text>
</comment>
<comment type="catalytic activity">
    <reaction evidence="1">
        <text>a monocarboxylic acid amide + H2O = a monocarboxylate + NH4(+)</text>
        <dbReference type="Rhea" id="RHEA:12020"/>
        <dbReference type="ChEBI" id="CHEBI:15377"/>
        <dbReference type="ChEBI" id="CHEBI:28938"/>
        <dbReference type="ChEBI" id="CHEBI:35757"/>
        <dbReference type="ChEBI" id="CHEBI:83628"/>
        <dbReference type="EC" id="3.5.1.4"/>
    </reaction>
</comment>
<comment type="similarity">
    <text evidence="1">Belongs to the carbon-nitrogen hydrolase superfamily. Aliphatic amidase family.</text>
</comment>
<gene>
    <name evidence="1" type="primary">amiE</name>
    <name type="ordered locus">PA14_20560</name>
</gene>
<reference key="1">
    <citation type="journal article" date="2006" name="Genome Biol.">
        <title>Genomic analysis reveals that Pseudomonas aeruginosa virulence is combinatorial.</title>
        <authorList>
            <person name="Lee D.G."/>
            <person name="Urbach J.M."/>
            <person name="Wu G."/>
            <person name="Liberati N.T."/>
            <person name="Feinbaum R.L."/>
            <person name="Miyata S."/>
            <person name="Diggins L.T."/>
            <person name="He J."/>
            <person name="Saucier M."/>
            <person name="Deziel E."/>
            <person name="Friedman L."/>
            <person name="Li L."/>
            <person name="Grills G."/>
            <person name="Montgomery K."/>
            <person name="Kucherlapati R."/>
            <person name="Rahme L.G."/>
            <person name="Ausubel F.M."/>
        </authorList>
    </citation>
    <scope>NUCLEOTIDE SEQUENCE [LARGE SCALE GENOMIC DNA]</scope>
    <source>
        <strain>UCBPP-PA14</strain>
    </source>
</reference>
<accession>Q02QK0</accession>
<sequence>MRHGDISSSNDTVGVAVVNYKMPRLHTAAEVLDNARKIADMIVGMKQGLPGMDLVVFPEYSLQGIMYDPAEMMETAVAIPGEETEIFSRACRKANVWGVFSLTGERHEEHPRKAPYNTLVLIDNNGEIVQKYRKIIPWCPIEGWYPGGQTYVSEGPKGMKISLIICDDGNYPEIWRDCAMKGAELIVRCQGYMYPAKDQQVMMAKAMAWANNCYVAVANAAGFDGVYSYFGHSAIIGFDGRTLGECGEEEMGIQYAQLSLSQIRDARANDQSQNHLFKILHRGYSGLQASGDGDRGLAECPFEFYRTWVTDAEKARENVERLTRSTTGVAQCPVGRLPYEGLEKEA</sequence>
<dbReference type="EC" id="3.5.1.4" evidence="1"/>
<dbReference type="EMBL" id="CP000438">
    <property type="protein sequence ID" value="ABJ12617.1"/>
    <property type="molecule type" value="Genomic_DNA"/>
</dbReference>
<dbReference type="RefSeq" id="WP_003091756.1">
    <property type="nucleotide sequence ID" value="NZ_CP034244.1"/>
</dbReference>
<dbReference type="SMR" id="Q02QK0"/>
<dbReference type="KEGG" id="pau:PA14_20560"/>
<dbReference type="PseudoCAP" id="PA14_20560"/>
<dbReference type="HOGENOM" id="CLU_071797_0_0_6"/>
<dbReference type="BioCyc" id="PAER208963:G1G74-1695-MONOMER"/>
<dbReference type="Proteomes" id="UP000000653">
    <property type="component" value="Chromosome"/>
</dbReference>
<dbReference type="GO" id="GO:0004040">
    <property type="term" value="F:amidase activity"/>
    <property type="evidence" value="ECO:0007669"/>
    <property type="project" value="UniProtKB-UniRule"/>
</dbReference>
<dbReference type="CDD" id="cd07565">
    <property type="entry name" value="aliphatic_amidase"/>
    <property type="match status" value="1"/>
</dbReference>
<dbReference type="FunFam" id="3.60.110.10:FF:000014">
    <property type="entry name" value="Aliphatic amidase"/>
    <property type="match status" value="1"/>
</dbReference>
<dbReference type="Gene3D" id="3.60.110.10">
    <property type="entry name" value="Carbon-nitrogen hydrolase"/>
    <property type="match status" value="1"/>
</dbReference>
<dbReference type="HAMAP" id="MF_01242">
    <property type="entry name" value="Aliphatic_amidase"/>
    <property type="match status" value="1"/>
</dbReference>
<dbReference type="InterPro" id="IPR050345">
    <property type="entry name" value="Aliph_Amidase/BUP"/>
</dbReference>
<dbReference type="InterPro" id="IPR023719">
    <property type="entry name" value="Aliphatic_amidase"/>
</dbReference>
<dbReference type="InterPro" id="IPR003010">
    <property type="entry name" value="C-N_Hydrolase"/>
</dbReference>
<dbReference type="InterPro" id="IPR036526">
    <property type="entry name" value="C-N_Hydrolase_sf"/>
</dbReference>
<dbReference type="NCBIfam" id="NF009802">
    <property type="entry name" value="PRK13286.1"/>
    <property type="match status" value="1"/>
</dbReference>
<dbReference type="PANTHER" id="PTHR43674:SF14">
    <property type="entry name" value="ALIPHATIC AMIDASE"/>
    <property type="match status" value="1"/>
</dbReference>
<dbReference type="PANTHER" id="PTHR43674">
    <property type="entry name" value="NITRILASE C965.09-RELATED"/>
    <property type="match status" value="1"/>
</dbReference>
<dbReference type="Pfam" id="PF00795">
    <property type="entry name" value="CN_hydrolase"/>
    <property type="match status" value="1"/>
</dbReference>
<dbReference type="SUPFAM" id="SSF56317">
    <property type="entry name" value="Carbon-nitrogen hydrolase"/>
    <property type="match status" value="1"/>
</dbReference>
<dbReference type="PROSITE" id="PS50263">
    <property type="entry name" value="CN_HYDROLASE"/>
    <property type="match status" value="1"/>
</dbReference>
<keyword id="KW-0378">Hydrolase</keyword>
<name>AMIE_PSEAB</name>
<organism>
    <name type="scientific">Pseudomonas aeruginosa (strain UCBPP-PA14)</name>
    <dbReference type="NCBI Taxonomy" id="208963"/>
    <lineage>
        <taxon>Bacteria</taxon>
        <taxon>Pseudomonadati</taxon>
        <taxon>Pseudomonadota</taxon>
        <taxon>Gammaproteobacteria</taxon>
        <taxon>Pseudomonadales</taxon>
        <taxon>Pseudomonadaceae</taxon>
        <taxon>Pseudomonas</taxon>
    </lineage>
</organism>
<proteinExistence type="inferred from homology"/>
<feature type="chain" id="PRO_1000067052" description="Aliphatic amidase">
    <location>
        <begin position="1"/>
        <end position="346"/>
    </location>
</feature>
<feature type="domain" description="CN hydrolase" evidence="2">
    <location>
        <begin position="13"/>
        <end position="260"/>
    </location>
</feature>
<feature type="active site" description="Proton acceptor" evidence="1">
    <location>
        <position position="59"/>
    </location>
</feature>
<feature type="active site" description="Proton donor" evidence="1">
    <location>
        <position position="134"/>
    </location>
</feature>
<feature type="active site" description="Nucleophile" evidence="1">
    <location>
        <position position="166"/>
    </location>
</feature>